<evidence type="ECO:0000255" key="1">
    <source>
        <dbReference type="HAMAP-Rule" id="MF_01007"/>
    </source>
</evidence>
<evidence type="ECO:0000256" key="2">
    <source>
        <dbReference type="SAM" id="MobiDB-lite"/>
    </source>
</evidence>
<feature type="chain" id="PRO_0000387181" description="Ribosomal RNA small subunit methyltransferase H">
    <location>
        <begin position="1"/>
        <end position="294"/>
    </location>
</feature>
<feature type="region of interest" description="Disordered" evidence="2">
    <location>
        <begin position="265"/>
        <end position="285"/>
    </location>
</feature>
<feature type="binding site" evidence="1">
    <location>
        <begin position="36"/>
        <end position="38"/>
    </location>
    <ligand>
        <name>S-adenosyl-L-methionine</name>
        <dbReference type="ChEBI" id="CHEBI:59789"/>
    </ligand>
</feature>
<feature type="binding site" evidence="1">
    <location>
        <position position="55"/>
    </location>
    <ligand>
        <name>S-adenosyl-L-methionine</name>
        <dbReference type="ChEBI" id="CHEBI:59789"/>
    </ligand>
</feature>
<feature type="binding site" evidence="1">
    <location>
        <position position="82"/>
    </location>
    <ligand>
        <name>S-adenosyl-L-methionine</name>
        <dbReference type="ChEBI" id="CHEBI:59789"/>
    </ligand>
</feature>
<feature type="binding site" evidence="1">
    <location>
        <position position="97"/>
    </location>
    <ligand>
        <name>S-adenosyl-L-methionine</name>
        <dbReference type="ChEBI" id="CHEBI:59789"/>
    </ligand>
</feature>
<feature type="binding site" evidence="1">
    <location>
        <position position="104"/>
    </location>
    <ligand>
        <name>S-adenosyl-L-methionine</name>
        <dbReference type="ChEBI" id="CHEBI:59789"/>
    </ligand>
</feature>
<reference key="1">
    <citation type="submission" date="2005-08" db="EMBL/GenBank/DDBJ databases">
        <title>Complete sequence of Synechococcus sp. CC9902.</title>
        <authorList>
            <person name="Copeland A."/>
            <person name="Lucas S."/>
            <person name="Lapidus A."/>
            <person name="Barry K."/>
            <person name="Detter J.C."/>
            <person name="Glavina T."/>
            <person name="Hammon N."/>
            <person name="Israni S."/>
            <person name="Pitluck S."/>
            <person name="Martinez M."/>
            <person name="Schmutz J."/>
            <person name="Larimer F."/>
            <person name="Land M."/>
            <person name="Kyrpides N."/>
            <person name="Ivanova N."/>
            <person name="Richardson P."/>
        </authorList>
    </citation>
    <scope>NUCLEOTIDE SEQUENCE [LARGE SCALE GENOMIC DNA]</scope>
    <source>
        <strain>CC9902</strain>
    </source>
</reference>
<sequence>MPPFSHVPVLADAVVAGAEHLPHHNGVLIDATLGGGGHSALLLERFPGLRLIGLDQDPTARAAAAERLAAFADRVEILATNFASYTPPAPVLMVLADLGVSSPQLDVAERGFSFRLDGPLDMRMNPGSDGETAAELIDRLEENALADLIYGYGEERLSRRIARRIKADLAAQGPYEGTAALAYAVAGCYPPKARRGRIHPATRTFQALRIAVNDELAVLDRLLQQAPDWLETGGVMGVISFHSLEDRRVKTAFLQDERLERITRKPTVATDDEQNRNPRSRSAKWRLARRVNGC</sequence>
<accession>Q3AW00</accession>
<keyword id="KW-0963">Cytoplasm</keyword>
<keyword id="KW-0489">Methyltransferase</keyword>
<keyword id="KW-1185">Reference proteome</keyword>
<keyword id="KW-0698">rRNA processing</keyword>
<keyword id="KW-0949">S-adenosyl-L-methionine</keyword>
<keyword id="KW-0808">Transferase</keyword>
<protein>
    <recommendedName>
        <fullName evidence="1">Ribosomal RNA small subunit methyltransferase H</fullName>
        <ecNumber evidence="1">2.1.1.199</ecNumber>
    </recommendedName>
    <alternativeName>
        <fullName evidence="1">16S rRNA m(4)C1402 methyltransferase</fullName>
    </alternativeName>
    <alternativeName>
        <fullName evidence="1">rRNA (cytosine-N(4)-)-methyltransferase RsmH</fullName>
    </alternativeName>
</protein>
<proteinExistence type="inferred from homology"/>
<gene>
    <name evidence="1" type="primary">rsmH</name>
    <name type="synonym">mraW</name>
    <name type="ordered locus">Syncc9902_2111</name>
</gene>
<name>RSMH_SYNS9</name>
<comment type="function">
    <text evidence="1">Specifically methylates the N4 position of cytidine in position 1402 (C1402) of 16S rRNA.</text>
</comment>
<comment type="catalytic activity">
    <reaction evidence="1">
        <text>cytidine(1402) in 16S rRNA + S-adenosyl-L-methionine = N(4)-methylcytidine(1402) in 16S rRNA + S-adenosyl-L-homocysteine + H(+)</text>
        <dbReference type="Rhea" id="RHEA:42928"/>
        <dbReference type="Rhea" id="RHEA-COMP:10286"/>
        <dbReference type="Rhea" id="RHEA-COMP:10287"/>
        <dbReference type="ChEBI" id="CHEBI:15378"/>
        <dbReference type="ChEBI" id="CHEBI:57856"/>
        <dbReference type="ChEBI" id="CHEBI:59789"/>
        <dbReference type="ChEBI" id="CHEBI:74506"/>
        <dbReference type="ChEBI" id="CHEBI:82748"/>
        <dbReference type="EC" id="2.1.1.199"/>
    </reaction>
</comment>
<comment type="subcellular location">
    <subcellularLocation>
        <location evidence="1">Cytoplasm</location>
    </subcellularLocation>
</comment>
<comment type="similarity">
    <text evidence="1">Belongs to the methyltransferase superfamily. RsmH family.</text>
</comment>
<organism>
    <name type="scientific">Synechococcus sp. (strain CC9902)</name>
    <dbReference type="NCBI Taxonomy" id="316279"/>
    <lineage>
        <taxon>Bacteria</taxon>
        <taxon>Bacillati</taxon>
        <taxon>Cyanobacteriota</taxon>
        <taxon>Cyanophyceae</taxon>
        <taxon>Synechococcales</taxon>
        <taxon>Synechococcaceae</taxon>
        <taxon>Synechococcus</taxon>
    </lineage>
</organism>
<dbReference type="EC" id="2.1.1.199" evidence="1"/>
<dbReference type="EMBL" id="CP000097">
    <property type="protein sequence ID" value="ABB27069.1"/>
    <property type="molecule type" value="Genomic_DNA"/>
</dbReference>
<dbReference type="RefSeq" id="WP_011360853.1">
    <property type="nucleotide sequence ID" value="NC_007513.1"/>
</dbReference>
<dbReference type="SMR" id="Q3AW00"/>
<dbReference type="STRING" id="316279.Syncc9902_2111"/>
<dbReference type="KEGG" id="sye:Syncc9902_2111"/>
<dbReference type="eggNOG" id="COG0275">
    <property type="taxonomic scope" value="Bacteria"/>
</dbReference>
<dbReference type="HOGENOM" id="CLU_038422_3_0_3"/>
<dbReference type="OrthoDB" id="9806637at2"/>
<dbReference type="Proteomes" id="UP000002712">
    <property type="component" value="Chromosome"/>
</dbReference>
<dbReference type="GO" id="GO:0005737">
    <property type="term" value="C:cytoplasm"/>
    <property type="evidence" value="ECO:0007669"/>
    <property type="project" value="UniProtKB-SubCell"/>
</dbReference>
<dbReference type="GO" id="GO:0071424">
    <property type="term" value="F:rRNA (cytosine-N4-)-methyltransferase activity"/>
    <property type="evidence" value="ECO:0007669"/>
    <property type="project" value="UniProtKB-UniRule"/>
</dbReference>
<dbReference type="GO" id="GO:0070475">
    <property type="term" value="P:rRNA base methylation"/>
    <property type="evidence" value="ECO:0007669"/>
    <property type="project" value="UniProtKB-UniRule"/>
</dbReference>
<dbReference type="Gene3D" id="1.10.150.170">
    <property type="entry name" value="Putative methyltransferase TM0872, insert domain"/>
    <property type="match status" value="1"/>
</dbReference>
<dbReference type="Gene3D" id="3.40.50.150">
    <property type="entry name" value="Vaccinia Virus protein VP39"/>
    <property type="match status" value="1"/>
</dbReference>
<dbReference type="HAMAP" id="MF_01007">
    <property type="entry name" value="16SrRNA_methyltr_H"/>
    <property type="match status" value="1"/>
</dbReference>
<dbReference type="InterPro" id="IPR002903">
    <property type="entry name" value="RsmH"/>
</dbReference>
<dbReference type="InterPro" id="IPR023397">
    <property type="entry name" value="SAM-dep_MeTrfase_MraW_recog"/>
</dbReference>
<dbReference type="InterPro" id="IPR029063">
    <property type="entry name" value="SAM-dependent_MTases_sf"/>
</dbReference>
<dbReference type="NCBIfam" id="TIGR00006">
    <property type="entry name" value="16S rRNA (cytosine(1402)-N(4))-methyltransferase RsmH"/>
    <property type="match status" value="1"/>
</dbReference>
<dbReference type="PANTHER" id="PTHR11265:SF0">
    <property type="entry name" value="12S RRNA N4-METHYLCYTIDINE METHYLTRANSFERASE"/>
    <property type="match status" value="1"/>
</dbReference>
<dbReference type="PANTHER" id="PTHR11265">
    <property type="entry name" value="S-ADENOSYL-METHYLTRANSFERASE MRAW"/>
    <property type="match status" value="1"/>
</dbReference>
<dbReference type="Pfam" id="PF01795">
    <property type="entry name" value="Methyltransf_5"/>
    <property type="match status" value="1"/>
</dbReference>
<dbReference type="PIRSF" id="PIRSF004486">
    <property type="entry name" value="MraW"/>
    <property type="match status" value="1"/>
</dbReference>
<dbReference type="SUPFAM" id="SSF81799">
    <property type="entry name" value="Putative methyltransferase TM0872, insert domain"/>
    <property type="match status" value="1"/>
</dbReference>
<dbReference type="SUPFAM" id="SSF53335">
    <property type="entry name" value="S-adenosyl-L-methionine-dependent methyltransferases"/>
    <property type="match status" value="1"/>
</dbReference>